<keyword id="KW-0227">DNA damage</keyword>
<keyword id="KW-0234">DNA repair</keyword>
<keyword id="KW-0255">Endonuclease</keyword>
<keyword id="KW-0378">Hydrolase</keyword>
<keyword id="KW-0479">Metal-binding</keyword>
<keyword id="KW-0540">Nuclease</keyword>
<keyword id="KW-1185">Reference proteome</keyword>
<keyword id="KW-0862">Zinc</keyword>
<proteinExistence type="inferred from homology"/>
<name>END4_HELMI</name>
<evidence type="ECO:0000255" key="1">
    <source>
        <dbReference type="HAMAP-Rule" id="MF_00152"/>
    </source>
</evidence>
<reference key="1">
    <citation type="journal article" date="2008" name="J. Bacteriol.">
        <title>The genome of Heliobacterium modesticaldum, a phototrophic representative of the Firmicutes containing the simplest photosynthetic apparatus.</title>
        <authorList>
            <person name="Sattley W.M."/>
            <person name="Madigan M.T."/>
            <person name="Swingley W.D."/>
            <person name="Cheung P.C."/>
            <person name="Clocksin K.M."/>
            <person name="Conrad A.L."/>
            <person name="Dejesa L.C."/>
            <person name="Honchak B.M."/>
            <person name="Jung D.O."/>
            <person name="Karbach L.E."/>
            <person name="Kurdoglu A."/>
            <person name="Lahiri S."/>
            <person name="Mastrian S.D."/>
            <person name="Page L.E."/>
            <person name="Taylor H.L."/>
            <person name="Wang Z.T."/>
            <person name="Raymond J."/>
            <person name="Chen M."/>
            <person name="Blankenship R.E."/>
            <person name="Touchman J.W."/>
        </authorList>
    </citation>
    <scope>NUCLEOTIDE SEQUENCE [LARGE SCALE GENOMIC DNA]</scope>
    <source>
        <strain>ATCC 51547 / Ice1</strain>
    </source>
</reference>
<accession>B0TD39</accession>
<dbReference type="EC" id="3.1.21.2" evidence="1"/>
<dbReference type="EMBL" id="CP000930">
    <property type="protein sequence ID" value="ABZ82737.1"/>
    <property type="molecule type" value="Genomic_DNA"/>
</dbReference>
<dbReference type="RefSeq" id="WP_012281286.1">
    <property type="nucleotide sequence ID" value="NC_010337.2"/>
</dbReference>
<dbReference type="SMR" id="B0TD39"/>
<dbReference type="STRING" id="498761.HM1_0112"/>
<dbReference type="KEGG" id="hmo:HM1_0112"/>
<dbReference type="eggNOG" id="COG0648">
    <property type="taxonomic scope" value="Bacteria"/>
</dbReference>
<dbReference type="HOGENOM" id="CLU_025885_4_1_9"/>
<dbReference type="OrthoDB" id="9805666at2"/>
<dbReference type="Proteomes" id="UP000008550">
    <property type="component" value="Chromosome"/>
</dbReference>
<dbReference type="GO" id="GO:0008833">
    <property type="term" value="F:deoxyribonuclease IV (phage-T4-induced) activity"/>
    <property type="evidence" value="ECO:0007669"/>
    <property type="project" value="UniProtKB-UniRule"/>
</dbReference>
<dbReference type="GO" id="GO:0003677">
    <property type="term" value="F:DNA binding"/>
    <property type="evidence" value="ECO:0007669"/>
    <property type="project" value="InterPro"/>
</dbReference>
<dbReference type="GO" id="GO:0003906">
    <property type="term" value="F:DNA-(apurinic or apyrimidinic site) endonuclease activity"/>
    <property type="evidence" value="ECO:0007669"/>
    <property type="project" value="TreeGrafter"/>
</dbReference>
<dbReference type="GO" id="GO:0008081">
    <property type="term" value="F:phosphoric diester hydrolase activity"/>
    <property type="evidence" value="ECO:0007669"/>
    <property type="project" value="TreeGrafter"/>
</dbReference>
<dbReference type="GO" id="GO:0008270">
    <property type="term" value="F:zinc ion binding"/>
    <property type="evidence" value="ECO:0007669"/>
    <property type="project" value="UniProtKB-UniRule"/>
</dbReference>
<dbReference type="GO" id="GO:0006284">
    <property type="term" value="P:base-excision repair"/>
    <property type="evidence" value="ECO:0007669"/>
    <property type="project" value="TreeGrafter"/>
</dbReference>
<dbReference type="CDD" id="cd00019">
    <property type="entry name" value="AP2Ec"/>
    <property type="match status" value="1"/>
</dbReference>
<dbReference type="FunFam" id="3.20.20.150:FF:000001">
    <property type="entry name" value="Probable endonuclease 4"/>
    <property type="match status" value="1"/>
</dbReference>
<dbReference type="Gene3D" id="3.20.20.150">
    <property type="entry name" value="Divalent-metal-dependent TIM barrel enzymes"/>
    <property type="match status" value="1"/>
</dbReference>
<dbReference type="HAMAP" id="MF_00152">
    <property type="entry name" value="Nfo"/>
    <property type="match status" value="1"/>
</dbReference>
<dbReference type="InterPro" id="IPR001719">
    <property type="entry name" value="AP_endonuc_2"/>
</dbReference>
<dbReference type="InterPro" id="IPR018246">
    <property type="entry name" value="AP_endonuc_F2_Zn_BS"/>
</dbReference>
<dbReference type="InterPro" id="IPR036237">
    <property type="entry name" value="Xyl_isomerase-like_sf"/>
</dbReference>
<dbReference type="InterPro" id="IPR013022">
    <property type="entry name" value="Xyl_isomerase-like_TIM-brl"/>
</dbReference>
<dbReference type="NCBIfam" id="TIGR00587">
    <property type="entry name" value="nfo"/>
    <property type="match status" value="1"/>
</dbReference>
<dbReference type="PANTHER" id="PTHR21445:SF0">
    <property type="entry name" value="APURINIC-APYRIMIDINIC ENDONUCLEASE"/>
    <property type="match status" value="1"/>
</dbReference>
<dbReference type="PANTHER" id="PTHR21445">
    <property type="entry name" value="ENDONUCLEASE IV ENDODEOXYRIBONUCLEASE IV"/>
    <property type="match status" value="1"/>
</dbReference>
<dbReference type="Pfam" id="PF01261">
    <property type="entry name" value="AP_endonuc_2"/>
    <property type="match status" value="1"/>
</dbReference>
<dbReference type="SMART" id="SM00518">
    <property type="entry name" value="AP2Ec"/>
    <property type="match status" value="1"/>
</dbReference>
<dbReference type="SUPFAM" id="SSF51658">
    <property type="entry name" value="Xylose isomerase-like"/>
    <property type="match status" value="1"/>
</dbReference>
<dbReference type="PROSITE" id="PS00731">
    <property type="entry name" value="AP_NUCLEASE_F2_3"/>
    <property type="match status" value="1"/>
</dbReference>
<dbReference type="PROSITE" id="PS51432">
    <property type="entry name" value="AP_NUCLEASE_F2_4"/>
    <property type="match status" value="1"/>
</dbReference>
<gene>
    <name evidence="1" type="primary">nfo</name>
    <name type="ordered locus">Helmi_01120</name>
    <name type="ORF">HM1_0112</name>
</gene>
<feature type="chain" id="PRO_1000118100" description="Probable endonuclease 4">
    <location>
        <begin position="1"/>
        <end position="276"/>
    </location>
</feature>
<feature type="binding site" evidence="1">
    <location>
        <position position="66"/>
    </location>
    <ligand>
        <name>Zn(2+)</name>
        <dbReference type="ChEBI" id="CHEBI:29105"/>
        <label>1</label>
    </ligand>
</feature>
<feature type="binding site" evidence="1">
    <location>
        <position position="106"/>
    </location>
    <ligand>
        <name>Zn(2+)</name>
        <dbReference type="ChEBI" id="CHEBI:29105"/>
        <label>1</label>
    </ligand>
</feature>
<feature type="binding site" evidence="1">
    <location>
        <position position="141"/>
    </location>
    <ligand>
        <name>Zn(2+)</name>
        <dbReference type="ChEBI" id="CHEBI:29105"/>
        <label>1</label>
    </ligand>
</feature>
<feature type="binding site" evidence="1">
    <location>
        <position position="141"/>
    </location>
    <ligand>
        <name>Zn(2+)</name>
        <dbReference type="ChEBI" id="CHEBI:29105"/>
        <label>2</label>
    </ligand>
</feature>
<feature type="binding site" evidence="1">
    <location>
        <position position="175"/>
    </location>
    <ligand>
        <name>Zn(2+)</name>
        <dbReference type="ChEBI" id="CHEBI:29105"/>
        <label>2</label>
    </ligand>
</feature>
<feature type="binding site" evidence="1">
    <location>
        <position position="178"/>
    </location>
    <ligand>
        <name>Zn(2+)</name>
        <dbReference type="ChEBI" id="CHEBI:29105"/>
        <label>3</label>
    </ligand>
</feature>
<feature type="binding site" evidence="1">
    <location>
        <position position="210"/>
    </location>
    <ligand>
        <name>Zn(2+)</name>
        <dbReference type="ChEBI" id="CHEBI:29105"/>
        <label>2</label>
    </ligand>
</feature>
<feature type="binding site" evidence="1">
    <location>
        <position position="223"/>
    </location>
    <ligand>
        <name>Zn(2+)</name>
        <dbReference type="ChEBI" id="CHEBI:29105"/>
        <label>3</label>
    </ligand>
</feature>
<feature type="binding site" evidence="1">
    <location>
        <position position="225"/>
    </location>
    <ligand>
        <name>Zn(2+)</name>
        <dbReference type="ChEBI" id="CHEBI:29105"/>
        <label>3</label>
    </ligand>
</feature>
<feature type="binding site" evidence="1">
    <location>
        <position position="255"/>
    </location>
    <ligand>
        <name>Zn(2+)</name>
        <dbReference type="ChEBI" id="CHEBI:29105"/>
        <label>2</label>
    </ligand>
</feature>
<protein>
    <recommendedName>
        <fullName evidence="1">Probable endonuclease 4</fullName>
        <ecNumber evidence="1">3.1.21.2</ecNumber>
    </recommendedName>
    <alternativeName>
        <fullName evidence="1">Endodeoxyribonuclease IV</fullName>
    </alternativeName>
    <alternativeName>
        <fullName evidence="1">Endonuclease IV</fullName>
    </alternativeName>
</protein>
<sequence length="276" mass="29764">MYLGAHLSISKGFESAVREALSIGATTFQFFTRNPRGGAAKALDPDDIARSIWLREEHGFGPLVAHAPYTINLAAPKEETWAFAKMTLAADIVRMATAQVPYMVVHPGSHVGQGIEAGIERITQALNEILRPDQGVMVLLEGMSGAGTEVGGRFEELRAIIDGLQVPEVVGVNLDSCHLFGAGYDVKSDFAAVLDAFDRIIGLERLKAMHINDSQQPLGSHKDRHALLGQGLIGSDALAALLNHPALVGLPLNLETPGEIADYRREIAWMRSALKQ</sequence>
<organism>
    <name type="scientific">Heliobacterium modesticaldum (strain ATCC 51547 / Ice1)</name>
    <dbReference type="NCBI Taxonomy" id="498761"/>
    <lineage>
        <taxon>Bacteria</taxon>
        <taxon>Bacillati</taxon>
        <taxon>Bacillota</taxon>
        <taxon>Clostridia</taxon>
        <taxon>Eubacteriales</taxon>
        <taxon>Heliobacteriaceae</taxon>
        <taxon>Heliomicrobium</taxon>
    </lineage>
</organism>
<comment type="function">
    <text evidence="1">Endonuclease IV plays a role in DNA repair. It cleaves phosphodiester bonds at apurinic or apyrimidinic (AP) sites, generating a 3'-hydroxyl group and a 5'-terminal sugar phosphate.</text>
</comment>
<comment type="catalytic activity">
    <reaction evidence="1">
        <text>Endonucleolytic cleavage to 5'-phosphooligonucleotide end-products.</text>
        <dbReference type="EC" id="3.1.21.2"/>
    </reaction>
</comment>
<comment type="cofactor">
    <cofactor evidence="1">
        <name>Zn(2+)</name>
        <dbReference type="ChEBI" id="CHEBI:29105"/>
    </cofactor>
    <text evidence="1">Binds 3 Zn(2+) ions.</text>
</comment>
<comment type="similarity">
    <text evidence="1">Belongs to the AP endonuclease 2 family.</text>
</comment>